<reference key="1">
    <citation type="journal article" date="1997" name="Microbiology">
        <title>The Bacillus subtilis genome from gerBC (311 degrees) to licR (334 degrees).</title>
        <authorList>
            <person name="Presecan E."/>
            <person name="Moszer I."/>
            <person name="Boursier L."/>
            <person name="Cruz Ramos H."/>
            <person name="De La Fuente V."/>
            <person name="Hullo M.-F."/>
            <person name="Lelong C."/>
            <person name="Schleich S."/>
            <person name="Sekowska A."/>
            <person name="Song B.H."/>
            <person name="Villani G."/>
            <person name="Kunst F."/>
            <person name="Danchin A."/>
            <person name="Glaser P."/>
        </authorList>
    </citation>
    <scope>NUCLEOTIDE SEQUENCE [GENOMIC DNA]</scope>
    <source>
        <strain>168</strain>
    </source>
</reference>
<reference key="2">
    <citation type="journal article" date="1997" name="Nature">
        <title>The complete genome sequence of the Gram-positive bacterium Bacillus subtilis.</title>
        <authorList>
            <person name="Kunst F."/>
            <person name="Ogasawara N."/>
            <person name="Moszer I."/>
            <person name="Albertini A.M."/>
            <person name="Alloni G."/>
            <person name="Azevedo V."/>
            <person name="Bertero M.G."/>
            <person name="Bessieres P."/>
            <person name="Bolotin A."/>
            <person name="Borchert S."/>
            <person name="Borriss R."/>
            <person name="Boursier L."/>
            <person name="Brans A."/>
            <person name="Braun M."/>
            <person name="Brignell S.C."/>
            <person name="Bron S."/>
            <person name="Brouillet S."/>
            <person name="Bruschi C.V."/>
            <person name="Caldwell B."/>
            <person name="Capuano V."/>
            <person name="Carter N.M."/>
            <person name="Choi S.-K."/>
            <person name="Codani J.-J."/>
            <person name="Connerton I.F."/>
            <person name="Cummings N.J."/>
            <person name="Daniel R.A."/>
            <person name="Denizot F."/>
            <person name="Devine K.M."/>
            <person name="Duesterhoeft A."/>
            <person name="Ehrlich S.D."/>
            <person name="Emmerson P.T."/>
            <person name="Entian K.-D."/>
            <person name="Errington J."/>
            <person name="Fabret C."/>
            <person name="Ferrari E."/>
            <person name="Foulger D."/>
            <person name="Fritz C."/>
            <person name="Fujita M."/>
            <person name="Fujita Y."/>
            <person name="Fuma S."/>
            <person name="Galizzi A."/>
            <person name="Galleron N."/>
            <person name="Ghim S.-Y."/>
            <person name="Glaser P."/>
            <person name="Goffeau A."/>
            <person name="Golightly E.J."/>
            <person name="Grandi G."/>
            <person name="Guiseppi G."/>
            <person name="Guy B.J."/>
            <person name="Haga K."/>
            <person name="Haiech J."/>
            <person name="Harwood C.R."/>
            <person name="Henaut A."/>
            <person name="Hilbert H."/>
            <person name="Holsappel S."/>
            <person name="Hosono S."/>
            <person name="Hullo M.-F."/>
            <person name="Itaya M."/>
            <person name="Jones L.-M."/>
            <person name="Joris B."/>
            <person name="Karamata D."/>
            <person name="Kasahara Y."/>
            <person name="Klaerr-Blanchard M."/>
            <person name="Klein C."/>
            <person name="Kobayashi Y."/>
            <person name="Koetter P."/>
            <person name="Koningstein G."/>
            <person name="Krogh S."/>
            <person name="Kumano M."/>
            <person name="Kurita K."/>
            <person name="Lapidus A."/>
            <person name="Lardinois S."/>
            <person name="Lauber J."/>
            <person name="Lazarevic V."/>
            <person name="Lee S.-M."/>
            <person name="Levine A."/>
            <person name="Liu H."/>
            <person name="Masuda S."/>
            <person name="Mauel C."/>
            <person name="Medigue C."/>
            <person name="Medina N."/>
            <person name="Mellado R.P."/>
            <person name="Mizuno M."/>
            <person name="Moestl D."/>
            <person name="Nakai S."/>
            <person name="Noback M."/>
            <person name="Noone D."/>
            <person name="O'Reilly M."/>
            <person name="Ogawa K."/>
            <person name="Ogiwara A."/>
            <person name="Oudega B."/>
            <person name="Park S.-H."/>
            <person name="Parro V."/>
            <person name="Pohl T.M."/>
            <person name="Portetelle D."/>
            <person name="Porwollik S."/>
            <person name="Prescott A.M."/>
            <person name="Presecan E."/>
            <person name="Pujic P."/>
            <person name="Purnelle B."/>
            <person name="Rapoport G."/>
            <person name="Rey M."/>
            <person name="Reynolds S."/>
            <person name="Rieger M."/>
            <person name="Rivolta C."/>
            <person name="Rocha E."/>
            <person name="Roche B."/>
            <person name="Rose M."/>
            <person name="Sadaie Y."/>
            <person name="Sato T."/>
            <person name="Scanlan E."/>
            <person name="Schleich S."/>
            <person name="Schroeter R."/>
            <person name="Scoffone F."/>
            <person name="Sekiguchi J."/>
            <person name="Sekowska A."/>
            <person name="Seror S.J."/>
            <person name="Serror P."/>
            <person name="Shin B.-S."/>
            <person name="Soldo B."/>
            <person name="Sorokin A."/>
            <person name="Tacconi E."/>
            <person name="Takagi T."/>
            <person name="Takahashi H."/>
            <person name="Takemaru K."/>
            <person name="Takeuchi M."/>
            <person name="Tamakoshi A."/>
            <person name="Tanaka T."/>
            <person name="Terpstra P."/>
            <person name="Tognoni A."/>
            <person name="Tosato V."/>
            <person name="Uchiyama S."/>
            <person name="Vandenbol M."/>
            <person name="Vannier F."/>
            <person name="Vassarotti A."/>
            <person name="Viari A."/>
            <person name="Wambutt R."/>
            <person name="Wedler E."/>
            <person name="Wedler H."/>
            <person name="Weitzenegger T."/>
            <person name="Winters P."/>
            <person name="Wipat A."/>
            <person name="Yamamoto H."/>
            <person name="Yamane K."/>
            <person name="Yasumoto K."/>
            <person name="Yata K."/>
            <person name="Yoshida K."/>
            <person name="Yoshikawa H.-F."/>
            <person name="Zumstein E."/>
            <person name="Yoshikawa H."/>
            <person name="Danchin A."/>
        </authorList>
    </citation>
    <scope>NUCLEOTIDE SEQUENCE [LARGE SCALE GENOMIC DNA]</scope>
    <source>
        <strain>168</strain>
    </source>
</reference>
<reference key="3">
    <citation type="journal article" date="1999" name="J. Bacteriol.">
        <title>Genes of the sbo-alb locus of Bacillus subtilis are required for production of the antilisterial bacteriocin subtilosin.</title>
        <authorList>
            <person name="Zheng G."/>
            <person name="Yan L.Z."/>
            <person name="Vederas J.C."/>
            <person name="Zuber P."/>
        </authorList>
    </citation>
    <scope>FUNCTION</scope>
    <source>
        <strain>168 / JH642</strain>
        <strain>22a</strain>
    </source>
</reference>
<reference key="4">
    <citation type="journal article" date="2000" name="J. Bacteriol.">
        <title>Mutational analysis of the sbo-alb locus of Bacillus subtilis: identification of genes required for subtilosin production and immunity.</title>
        <authorList>
            <person name="Zheng G."/>
            <person name="Hehn R."/>
            <person name="Zuber P."/>
        </authorList>
    </citation>
    <scope>FUNCTION</scope>
    <source>
        <strain>168 / JH642</strain>
    </source>
</reference>
<reference key="5">
    <citation type="journal article" date="2000" name="J. Bacteriol.">
        <title>Dual control of sbo-alb operon expression by the Spo0 and ResDE systems of signal transduction under anaerobic conditions in Bacillus subtilis.</title>
        <authorList>
            <person name="Nakano M.M."/>
            <person name="Zheng G."/>
            <person name="Zuber P."/>
        </authorList>
    </citation>
    <scope>TRANSCRIPTIONAL REGULATION</scope>
    <source>
        <strain>168 / JH642</strain>
    </source>
</reference>
<protein>
    <recommendedName>
        <fullName>Putative zinc protease AlbF</fullName>
        <ecNumber>3.4.24.-</ecNumber>
    </recommendedName>
    <alternativeName>
        <fullName>Antilisterial bacteriocin subtilosin biosynthesis protein AlbF</fullName>
    </alternativeName>
</protein>
<organism>
    <name type="scientific">Bacillus subtilis (strain 168)</name>
    <dbReference type="NCBI Taxonomy" id="224308"/>
    <lineage>
        <taxon>Bacteria</taxon>
        <taxon>Bacillati</taxon>
        <taxon>Bacillota</taxon>
        <taxon>Bacilli</taxon>
        <taxon>Bacillales</taxon>
        <taxon>Bacillaceae</taxon>
        <taxon>Bacillus</taxon>
    </lineage>
</organism>
<dbReference type="EC" id="3.4.24.-"/>
<dbReference type="EMBL" id="Z80360">
    <property type="protein sequence ID" value="CAB02504.1"/>
    <property type="molecule type" value="Genomic_DNA"/>
</dbReference>
<dbReference type="EMBL" id="AL009126">
    <property type="protein sequence ID" value="CAB15769.1"/>
    <property type="molecule type" value="Genomic_DNA"/>
</dbReference>
<dbReference type="PIR" id="E70058">
    <property type="entry name" value="E70058"/>
</dbReference>
<dbReference type="RefSeq" id="NP_391622.1">
    <property type="nucleotide sequence ID" value="NC_000964.3"/>
</dbReference>
<dbReference type="RefSeq" id="WP_003242974.1">
    <property type="nucleotide sequence ID" value="NZ_OZ025638.1"/>
</dbReference>
<dbReference type="SMR" id="P71006"/>
<dbReference type="FunCoup" id="P71006">
    <property type="interactions" value="9"/>
</dbReference>
<dbReference type="IntAct" id="P71006">
    <property type="interactions" value="9"/>
</dbReference>
<dbReference type="STRING" id="224308.BSU37420"/>
<dbReference type="MEROPS" id="M16.A16"/>
<dbReference type="PaxDb" id="224308-BSU37420"/>
<dbReference type="DNASU" id="938515"/>
<dbReference type="EnsemblBacteria" id="CAB15769">
    <property type="protein sequence ID" value="CAB15769"/>
    <property type="gene ID" value="BSU_37420"/>
</dbReference>
<dbReference type="GeneID" id="938515"/>
<dbReference type="KEGG" id="bsu:BSU37420"/>
<dbReference type="PATRIC" id="fig|224308.179.peg.4052"/>
<dbReference type="eggNOG" id="COG0612">
    <property type="taxonomic scope" value="Bacteria"/>
</dbReference>
<dbReference type="InParanoid" id="P71006"/>
<dbReference type="OrthoDB" id="2892394at2"/>
<dbReference type="PhylomeDB" id="P71006"/>
<dbReference type="BioCyc" id="BSUB:BSU37420-MONOMER"/>
<dbReference type="Proteomes" id="UP000001570">
    <property type="component" value="Chromosome"/>
</dbReference>
<dbReference type="GO" id="GO:0046872">
    <property type="term" value="F:metal ion binding"/>
    <property type="evidence" value="ECO:0007669"/>
    <property type="project" value="UniProtKB-KW"/>
</dbReference>
<dbReference type="GO" id="GO:0008237">
    <property type="term" value="F:metallopeptidase activity"/>
    <property type="evidence" value="ECO:0007669"/>
    <property type="project" value="UniProtKB-KW"/>
</dbReference>
<dbReference type="GO" id="GO:0030152">
    <property type="term" value="P:bacteriocin biosynthetic process"/>
    <property type="evidence" value="ECO:0007669"/>
    <property type="project" value="UniProtKB-KW"/>
</dbReference>
<dbReference type="GO" id="GO:0006508">
    <property type="term" value="P:proteolysis"/>
    <property type="evidence" value="ECO:0007669"/>
    <property type="project" value="UniProtKB-KW"/>
</dbReference>
<dbReference type="Gene3D" id="3.30.830.10">
    <property type="entry name" value="Metalloenzyme, LuxS/M16 peptidase-like"/>
    <property type="match status" value="1"/>
</dbReference>
<dbReference type="InterPro" id="IPR011249">
    <property type="entry name" value="Metalloenz_LuxS/M16"/>
</dbReference>
<dbReference type="InterPro" id="IPR050361">
    <property type="entry name" value="MPP/UQCRC_Complex"/>
</dbReference>
<dbReference type="InterPro" id="IPR011765">
    <property type="entry name" value="Pept_M16_N"/>
</dbReference>
<dbReference type="PANTHER" id="PTHR11851">
    <property type="entry name" value="METALLOPROTEASE"/>
    <property type="match status" value="1"/>
</dbReference>
<dbReference type="PANTHER" id="PTHR11851:SF49">
    <property type="entry name" value="MITOCHONDRIAL-PROCESSING PEPTIDASE SUBUNIT ALPHA"/>
    <property type="match status" value="1"/>
</dbReference>
<dbReference type="Pfam" id="PF00675">
    <property type="entry name" value="Peptidase_M16"/>
    <property type="match status" value="1"/>
</dbReference>
<dbReference type="SUPFAM" id="SSF63411">
    <property type="entry name" value="LuxS/MPP-like metallohydrolase"/>
    <property type="match status" value="1"/>
</dbReference>
<sequence>MEKKAFFQQLDERTDIRYTDSGLKIFRLKFPRAHLRLCNVKIDFGSRDVCIRAESGDTLLPYGTAHFLEHLLFWHNGRNLYSDFFAHGALLNAFTTYTDTNFMFTSLPDRLRQTIPILLDALWNHSFDKKIVAQEKAVITSEIQTAHLNHQLSYHYQLISMLSPSSPAAVFPAGRIEDIEALDISDLQKAYKAAYQAHRMTLFLIGGSENTETLLPPHLQLEKRPDYHAERKIIPACPPVLSQKMMLGDEERMEDTWTGLQIGALPGQNDLLSIKLYWDIAARILFQLDSPFFQEIQQTYRLEIDRLSAETYIYEDGGFLILHSQGTHSSAYIDVASYYVTQKKEQVAAWLQYGKDSLTDAIIYDSDYVRKCFEWAAECDRCDCSFLDMYHIIQDMDAQVFLSLIDAMASSNKAIIHVSQKEAIRQ</sequence>
<evidence type="ECO:0000250" key="1"/>
<evidence type="ECO:0000269" key="2">
    <source>
    </source>
</evidence>
<evidence type="ECO:0000269" key="3">
    <source>
    </source>
</evidence>
<evidence type="ECO:0000269" key="4">
    <source>
    </source>
</evidence>
<evidence type="ECO:0000305" key="5"/>
<keyword id="KW-0045">Antibiotic biosynthesis</keyword>
<keyword id="KW-0871">Bacteriocin biosynthesis</keyword>
<keyword id="KW-0378">Hydrolase</keyword>
<keyword id="KW-0479">Metal-binding</keyword>
<keyword id="KW-0482">Metalloprotease</keyword>
<keyword id="KW-0645">Protease</keyword>
<keyword id="KW-1185">Reference proteome</keyword>
<keyword id="KW-0862">Zinc</keyword>
<feature type="chain" id="PRO_0000074408" description="Putative zinc protease AlbF">
    <location>
        <begin position="1"/>
        <end position="426"/>
    </location>
</feature>
<feature type="active site" description="Proton acceptor" evidence="1">
    <location>
        <position position="69"/>
    </location>
</feature>
<feature type="binding site" evidence="1">
    <location>
        <position position="66"/>
    </location>
    <ligand>
        <name>Zn(2+)</name>
        <dbReference type="ChEBI" id="CHEBI:29105"/>
    </ligand>
</feature>
<feature type="binding site" evidence="1">
    <location>
        <position position="70"/>
    </location>
    <ligand>
        <name>Zn(2+)</name>
        <dbReference type="ChEBI" id="CHEBI:29105"/>
    </ligand>
</feature>
<feature type="binding site" evidence="1">
    <location>
        <position position="142"/>
    </location>
    <ligand>
        <name>Zn(2+)</name>
        <dbReference type="ChEBI" id="CHEBI:29105"/>
    </ligand>
</feature>
<gene>
    <name type="primary">albF</name>
    <name type="synonym">ywhN</name>
    <name type="ordered locus">BSU37420</name>
</gene>
<proteinExistence type="evidence at transcript level"/>
<comment type="function">
    <text evidence="2 3">Required for production of the bacteriocin subtilosin. Could catalyze some step in the processing of presubtilosin.</text>
</comment>
<comment type="cofactor">
    <cofactor evidence="1">
        <name>Zn(2+)</name>
        <dbReference type="ChEBI" id="CHEBI:29105"/>
    </cofactor>
    <text evidence="1">Divalent metal cations. Binds Zn(2+).</text>
</comment>
<comment type="induction">
    <text evidence="4">Transcription is highly induced by oxygen limitation and is under dual and independent control of Spo0A-AbrB and ResDE.</text>
</comment>
<comment type="similarity">
    <text evidence="5">Belongs to the peptidase M16 family.</text>
</comment>
<accession>P71006</accession>
<name>ALBF_BACSU</name>